<reference key="1">
    <citation type="journal article" date="2006" name="Proc. Natl. Acad. Sci. U.S.A.">
        <title>Genome sequence of Synechococcus CC9311: insights into adaptation to a coastal environment.</title>
        <authorList>
            <person name="Palenik B."/>
            <person name="Ren Q."/>
            <person name="Dupont C.L."/>
            <person name="Myers G.S."/>
            <person name="Heidelberg J.F."/>
            <person name="Badger J.H."/>
            <person name="Madupu R."/>
            <person name="Nelson W.C."/>
            <person name="Brinkac L.M."/>
            <person name="Dodson R.J."/>
            <person name="Durkin A.S."/>
            <person name="Daugherty S.C."/>
            <person name="Sullivan S.A."/>
            <person name="Khouri H."/>
            <person name="Mohamoud Y."/>
            <person name="Halpin R."/>
            <person name="Paulsen I.T."/>
        </authorList>
    </citation>
    <scope>NUCLEOTIDE SEQUENCE [LARGE SCALE GENOMIC DNA]</scope>
    <source>
        <strain>CC9311</strain>
    </source>
</reference>
<keyword id="KW-0963">Cytoplasm</keyword>
<keyword id="KW-0269">Exonuclease</keyword>
<keyword id="KW-0378">Hydrolase</keyword>
<keyword id="KW-0540">Nuclease</keyword>
<keyword id="KW-1185">Reference proteome</keyword>
<feature type="chain" id="PRO_0000303828" description="Exodeoxyribonuclease 7 large subunit">
    <location>
        <begin position="1"/>
        <end position="390"/>
    </location>
</feature>
<organism>
    <name type="scientific">Synechococcus sp. (strain CC9311)</name>
    <dbReference type="NCBI Taxonomy" id="64471"/>
    <lineage>
        <taxon>Bacteria</taxon>
        <taxon>Bacillati</taxon>
        <taxon>Cyanobacteriota</taxon>
        <taxon>Cyanophyceae</taxon>
        <taxon>Synechococcales</taxon>
        <taxon>Synechococcaceae</taxon>
        <taxon>Synechococcus</taxon>
    </lineage>
</organism>
<gene>
    <name evidence="1" type="primary">xseA</name>
    <name type="ordered locus">sync_2530</name>
</gene>
<name>EX7L_SYNS3</name>
<evidence type="ECO:0000255" key="1">
    <source>
        <dbReference type="HAMAP-Rule" id="MF_00378"/>
    </source>
</evidence>
<protein>
    <recommendedName>
        <fullName evidence="1">Exodeoxyribonuclease 7 large subunit</fullName>
        <ecNumber evidence="1">3.1.11.6</ecNumber>
    </recommendedName>
    <alternativeName>
        <fullName evidence="1">Exodeoxyribonuclease VII large subunit</fullName>
        <shortName evidence="1">Exonuclease VII large subunit</shortName>
    </alternativeName>
</protein>
<sequence>MSAESLPSYSVRELNNAIGVLLERGFAPRFVIQATVSRPQVKKGHLWLTLSDGEASITAVAWASKLKQLDFVPADGDGVTVIGKLNFWSARASLAVQVLDMRPSLTTVLRRFETVKAQLLEEGVIDPSRHRKLPAYPNRLAVLTSVPSSALADMLRTAQDRWPLSELLVVPIPVQGEVAPIICGVLNRLAETHHQLGLDAIVIARGGGSREDLMVFDDAEVCRKLATFPLPVVTGLGHEDDLTVADLVADHRAATPTAAMVTLMPSRESAQQTITQRRSRLSEYKRWRLEQANSRLRDRHLLLDALRPEVTLQRRRDQWQQRQQLLRALSPQRWLNRGFAMLNTTNGQPIQSINDISLNEQLQILLKDGVIQAVAKTIQANETSNSKTSP</sequence>
<dbReference type="EC" id="3.1.11.6" evidence="1"/>
<dbReference type="EMBL" id="CP000435">
    <property type="protein sequence ID" value="ABI45619.1"/>
    <property type="molecule type" value="Genomic_DNA"/>
</dbReference>
<dbReference type="RefSeq" id="WP_011620429.1">
    <property type="nucleotide sequence ID" value="NC_008319.1"/>
</dbReference>
<dbReference type="SMR" id="Q0I748"/>
<dbReference type="STRING" id="64471.sync_2530"/>
<dbReference type="KEGG" id="syg:sync_2530"/>
<dbReference type="eggNOG" id="COG1570">
    <property type="taxonomic scope" value="Bacteria"/>
</dbReference>
<dbReference type="HOGENOM" id="CLU_023625_2_1_3"/>
<dbReference type="OrthoDB" id="9802795at2"/>
<dbReference type="Proteomes" id="UP000001961">
    <property type="component" value="Chromosome"/>
</dbReference>
<dbReference type="GO" id="GO:0005737">
    <property type="term" value="C:cytoplasm"/>
    <property type="evidence" value="ECO:0007669"/>
    <property type="project" value="UniProtKB-SubCell"/>
</dbReference>
<dbReference type="GO" id="GO:0009318">
    <property type="term" value="C:exodeoxyribonuclease VII complex"/>
    <property type="evidence" value="ECO:0007669"/>
    <property type="project" value="InterPro"/>
</dbReference>
<dbReference type="GO" id="GO:0008855">
    <property type="term" value="F:exodeoxyribonuclease VII activity"/>
    <property type="evidence" value="ECO:0007669"/>
    <property type="project" value="UniProtKB-UniRule"/>
</dbReference>
<dbReference type="GO" id="GO:0003676">
    <property type="term" value="F:nucleic acid binding"/>
    <property type="evidence" value="ECO:0007669"/>
    <property type="project" value="InterPro"/>
</dbReference>
<dbReference type="GO" id="GO:0006308">
    <property type="term" value="P:DNA catabolic process"/>
    <property type="evidence" value="ECO:0007669"/>
    <property type="project" value="UniProtKB-UniRule"/>
</dbReference>
<dbReference type="CDD" id="cd04489">
    <property type="entry name" value="ExoVII_LU_OBF"/>
    <property type="match status" value="1"/>
</dbReference>
<dbReference type="HAMAP" id="MF_00378">
    <property type="entry name" value="Exonuc_7_L"/>
    <property type="match status" value="1"/>
</dbReference>
<dbReference type="InterPro" id="IPR003753">
    <property type="entry name" value="Exonuc_VII_L"/>
</dbReference>
<dbReference type="InterPro" id="IPR020579">
    <property type="entry name" value="Exonuc_VII_lsu_C"/>
</dbReference>
<dbReference type="InterPro" id="IPR025824">
    <property type="entry name" value="OB-fold_nuc-bd_dom"/>
</dbReference>
<dbReference type="NCBIfam" id="TIGR00237">
    <property type="entry name" value="xseA"/>
    <property type="match status" value="1"/>
</dbReference>
<dbReference type="PANTHER" id="PTHR30008">
    <property type="entry name" value="EXODEOXYRIBONUCLEASE 7 LARGE SUBUNIT"/>
    <property type="match status" value="1"/>
</dbReference>
<dbReference type="PANTHER" id="PTHR30008:SF0">
    <property type="entry name" value="EXODEOXYRIBONUCLEASE 7 LARGE SUBUNIT"/>
    <property type="match status" value="1"/>
</dbReference>
<dbReference type="Pfam" id="PF02601">
    <property type="entry name" value="Exonuc_VII_L"/>
    <property type="match status" value="2"/>
</dbReference>
<dbReference type="Pfam" id="PF13742">
    <property type="entry name" value="tRNA_anti_2"/>
    <property type="match status" value="1"/>
</dbReference>
<proteinExistence type="inferred from homology"/>
<accession>Q0I748</accession>
<comment type="function">
    <text evidence="1">Bidirectionally degrades single-stranded DNA into large acid-insoluble oligonucleotides, which are then degraded further into small acid-soluble oligonucleotides.</text>
</comment>
<comment type="catalytic activity">
    <reaction evidence="1">
        <text>Exonucleolytic cleavage in either 5'- to 3'- or 3'- to 5'-direction to yield nucleoside 5'-phosphates.</text>
        <dbReference type="EC" id="3.1.11.6"/>
    </reaction>
</comment>
<comment type="subunit">
    <text evidence="1">Heterooligomer composed of large and small subunits.</text>
</comment>
<comment type="subcellular location">
    <subcellularLocation>
        <location evidence="1">Cytoplasm</location>
    </subcellularLocation>
</comment>
<comment type="similarity">
    <text evidence="1">Belongs to the XseA family.</text>
</comment>